<feature type="chain" id="PRO_1000138079" description="tRNA-modifying protein YgfZ">
    <location>
        <begin position="1"/>
        <end position="326"/>
    </location>
</feature>
<feature type="binding site" evidence="1">
    <location>
        <position position="27"/>
    </location>
    <ligand>
        <name>folate</name>
        <dbReference type="ChEBI" id="CHEBI:62501"/>
    </ligand>
</feature>
<feature type="binding site" evidence="1">
    <location>
        <position position="189"/>
    </location>
    <ligand>
        <name>folate</name>
        <dbReference type="ChEBI" id="CHEBI:62501"/>
    </ligand>
</feature>
<protein>
    <recommendedName>
        <fullName evidence="1">tRNA-modifying protein YgfZ</fullName>
    </recommendedName>
</protein>
<name>YGFZ_SALA4</name>
<dbReference type="EMBL" id="CP001138">
    <property type="protein sequence ID" value="ACH50301.1"/>
    <property type="molecule type" value="Genomic_DNA"/>
</dbReference>
<dbReference type="RefSeq" id="WP_000874176.1">
    <property type="nucleotide sequence ID" value="NC_011149.1"/>
</dbReference>
<dbReference type="SMR" id="B5F5H2"/>
<dbReference type="KEGG" id="sea:SeAg_B3205"/>
<dbReference type="HOGENOM" id="CLU_007884_6_1_6"/>
<dbReference type="Proteomes" id="UP000008819">
    <property type="component" value="Chromosome"/>
</dbReference>
<dbReference type="GO" id="GO:0005737">
    <property type="term" value="C:cytoplasm"/>
    <property type="evidence" value="ECO:0007669"/>
    <property type="project" value="UniProtKB-SubCell"/>
</dbReference>
<dbReference type="GO" id="GO:0005542">
    <property type="term" value="F:folic acid binding"/>
    <property type="evidence" value="ECO:0007669"/>
    <property type="project" value="UniProtKB-UniRule"/>
</dbReference>
<dbReference type="GO" id="GO:0016226">
    <property type="term" value="P:iron-sulfur cluster assembly"/>
    <property type="evidence" value="ECO:0007669"/>
    <property type="project" value="TreeGrafter"/>
</dbReference>
<dbReference type="GO" id="GO:0009451">
    <property type="term" value="P:RNA modification"/>
    <property type="evidence" value="ECO:0007669"/>
    <property type="project" value="InterPro"/>
</dbReference>
<dbReference type="GO" id="GO:0008033">
    <property type="term" value="P:tRNA processing"/>
    <property type="evidence" value="ECO:0007669"/>
    <property type="project" value="UniProtKB-UniRule"/>
</dbReference>
<dbReference type="FunFam" id="2.40.30.160:FF:000001">
    <property type="entry name" value="tRNA-modifying protein YgfZ"/>
    <property type="match status" value="1"/>
</dbReference>
<dbReference type="FunFam" id="3.30.70.1400:FF:000002">
    <property type="entry name" value="tRNA-modifying protein YgfZ"/>
    <property type="match status" value="1"/>
</dbReference>
<dbReference type="FunFam" id="3.30.70.1630:FF:000001">
    <property type="entry name" value="tRNA-modifying protein YgfZ"/>
    <property type="match status" value="1"/>
</dbReference>
<dbReference type="Gene3D" id="2.40.30.160">
    <property type="match status" value="1"/>
</dbReference>
<dbReference type="Gene3D" id="3.30.70.1630">
    <property type="match status" value="1"/>
</dbReference>
<dbReference type="Gene3D" id="3.30.70.1400">
    <property type="entry name" value="Aminomethyltransferase beta-barrel domains"/>
    <property type="match status" value="1"/>
</dbReference>
<dbReference type="HAMAP" id="MF_01175">
    <property type="entry name" value="tRNA_modifying_YgfZ"/>
    <property type="match status" value="1"/>
</dbReference>
<dbReference type="InterPro" id="IPR006222">
    <property type="entry name" value="GCV_T_N"/>
</dbReference>
<dbReference type="InterPro" id="IPR029043">
    <property type="entry name" value="GcvT/YgfZ_C"/>
</dbReference>
<dbReference type="InterPro" id="IPR023758">
    <property type="entry name" value="tRNA-modifying_YgfZ"/>
</dbReference>
<dbReference type="InterPro" id="IPR045179">
    <property type="entry name" value="YgfZ/GcvT"/>
</dbReference>
<dbReference type="InterPro" id="IPR017703">
    <property type="entry name" value="YgfZ/GcvT_CS"/>
</dbReference>
<dbReference type="InterPro" id="IPR048451">
    <property type="entry name" value="YgfZ_barrel"/>
</dbReference>
<dbReference type="NCBIfam" id="NF007110">
    <property type="entry name" value="PRK09559.1"/>
    <property type="match status" value="1"/>
</dbReference>
<dbReference type="NCBIfam" id="TIGR03317">
    <property type="entry name" value="ygfZ_signature"/>
    <property type="match status" value="1"/>
</dbReference>
<dbReference type="PANTHER" id="PTHR22602">
    <property type="entry name" value="TRANSFERASE CAF17, MITOCHONDRIAL-RELATED"/>
    <property type="match status" value="1"/>
</dbReference>
<dbReference type="PANTHER" id="PTHR22602:SF0">
    <property type="entry name" value="TRANSFERASE CAF17, MITOCHONDRIAL-RELATED"/>
    <property type="match status" value="1"/>
</dbReference>
<dbReference type="Pfam" id="PF01571">
    <property type="entry name" value="GCV_T"/>
    <property type="match status" value="1"/>
</dbReference>
<dbReference type="Pfam" id="PF21130">
    <property type="entry name" value="YgfZ_barrel"/>
    <property type="match status" value="1"/>
</dbReference>
<dbReference type="SUPFAM" id="SSF101790">
    <property type="entry name" value="Aminomethyltransferase beta-barrel domain"/>
    <property type="match status" value="1"/>
</dbReference>
<dbReference type="SUPFAM" id="SSF103025">
    <property type="entry name" value="Folate-binding domain"/>
    <property type="match status" value="1"/>
</dbReference>
<keyword id="KW-0963">Cytoplasm</keyword>
<keyword id="KW-0290">Folate-binding</keyword>
<keyword id="KW-0819">tRNA processing</keyword>
<reference key="1">
    <citation type="journal article" date="2011" name="J. Bacteriol.">
        <title>Comparative genomics of 28 Salmonella enterica isolates: evidence for CRISPR-mediated adaptive sublineage evolution.</title>
        <authorList>
            <person name="Fricke W.F."/>
            <person name="Mammel M.K."/>
            <person name="McDermott P.F."/>
            <person name="Tartera C."/>
            <person name="White D.G."/>
            <person name="Leclerc J.E."/>
            <person name="Ravel J."/>
            <person name="Cebula T.A."/>
        </authorList>
    </citation>
    <scope>NUCLEOTIDE SEQUENCE [LARGE SCALE GENOMIC DNA]</scope>
    <source>
        <strain>SL483</strain>
    </source>
</reference>
<accession>B5F5H2</accession>
<organism>
    <name type="scientific">Salmonella agona (strain SL483)</name>
    <dbReference type="NCBI Taxonomy" id="454166"/>
    <lineage>
        <taxon>Bacteria</taxon>
        <taxon>Pseudomonadati</taxon>
        <taxon>Pseudomonadota</taxon>
        <taxon>Gammaproteobacteria</taxon>
        <taxon>Enterobacterales</taxon>
        <taxon>Enterobacteriaceae</taxon>
        <taxon>Salmonella</taxon>
    </lineage>
</organism>
<comment type="function">
    <text evidence="1">Folate-binding protein involved in regulating the level of ATP-DnaA and in the modification of some tRNAs. It is probably a key factor in regulatory networks that act via tRNA modification, such as initiation of chromosomal replication.</text>
</comment>
<comment type="subcellular location">
    <subcellularLocation>
        <location evidence="1">Cytoplasm</location>
    </subcellularLocation>
</comment>
<comment type="similarity">
    <text evidence="1">Belongs to the tRNA-modifying YgfZ family.</text>
</comment>
<proteinExistence type="inferred from homology"/>
<gene>
    <name evidence="1" type="primary">ygfZ</name>
    <name type="ordered locus">SeAg_B3205</name>
</gene>
<sequence>MAFISFPPRHPSSSARLPLTLIALDDWALSTITGVDSEKYIQGQVTADVSQMTEQQHLLAAHCDAKGKMWSTLRLFRERDGFAWIERRSVREAQLTELKKYAVFSKVVIAPDDERVLLGVAGFQARAALANVFSELPNSENQVVRDGASTLLWFEHPAERFLLVTDVATANMLTEKLHGEAELNNSQQWLALDIEAGIPVIDAANSGQFIPQATNLQALGGISFKKGCYTGQEMVARAKFRGANKRALWLLAGKASRVPEAGEDLELQMGENWRRTGAILAATQLDDGQLLVQAVMNNDLEAESVFRVRDDANTLHIVPLPYSLEE</sequence>
<evidence type="ECO:0000255" key="1">
    <source>
        <dbReference type="HAMAP-Rule" id="MF_01175"/>
    </source>
</evidence>